<comment type="function">
    <text evidence="1">Functions in the N-end rule pathway of protein degradation where it conjugates Leu, Phe and, less efficiently, Met from aminoacyl-tRNAs to the N-termini of proteins containing an N-terminal arginine or lysine.</text>
</comment>
<comment type="catalytic activity">
    <reaction evidence="1">
        <text>N-terminal L-lysyl-[protein] + L-leucyl-tRNA(Leu) = N-terminal L-leucyl-L-lysyl-[protein] + tRNA(Leu) + H(+)</text>
        <dbReference type="Rhea" id="RHEA:12340"/>
        <dbReference type="Rhea" id="RHEA-COMP:9613"/>
        <dbReference type="Rhea" id="RHEA-COMP:9622"/>
        <dbReference type="Rhea" id="RHEA-COMP:12670"/>
        <dbReference type="Rhea" id="RHEA-COMP:12671"/>
        <dbReference type="ChEBI" id="CHEBI:15378"/>
        <dbReference type="ChEBI" id="CHEBI:65249"/>
        <dbReference type="ChEBI" id="CHEBI:78442"/>
        <dbReference type="ChEBI" id="CHEBI:78494"/>
        <dbReference type="ChEBI" id="CHEBI:133043"/>
        <dbReference type="EC" id="2.3.2.6"/>
    </reaction>
</comment>
<comment type="catalytic activity">
    <reaction evidence="1">
        <text>N-terminal L-arginyl-[protein] + L-leucyl-tRNA(Leu) = N-terminal L-leucyl-L-arginyl-[protein] + tRNA(Leu) + H(+)</text>
        <dbReference type="Rhea" id="RHEA:50416"/>
        <dbReference type="Rhea" id="RHEA-COMP:9613"/>
        <dbReference type="Rhea" id="RHEA-COMP:9622"/>
        <dbReference type="Rhea" id="RHEA-COMP:12672"/>
        <dbReference type="Rhea" id="RHEA-COMP:12673"/>
        <dbReference type="ChEBI" id="CHEBI:15378"/>
        <dbReference type="ChEBI" id="CHEBI:64719"/>
        <dbReference type="ChEBI" id="CHEBI:78442"/>
        <dbReference type="ChEBI" id="CHEBI:78494"/>
        <dbReference type="ChEBI" id="CHEBI:133044"/>
        <dbReference type="EC" id="2.3.2.6"/>
    </reaction>
</comment>
<comment type="catalytic activity">
    <reaction evidence="1">
        <text>L-phenylalanyl-tRNA(Phe) + an N-terminal L-alpha-aminoacyl-[protein] = an N-terminal L-phenylalanyl-L-alpha-aminoacyl-[protein] + tRNA(Phe)</text>
        <dbReference type="Rhea" id="RHEA:43632"/>
        <dbReference type="Rhea" id="RHEA-COMP:9668"/>
        <dbReference type="Rhea" id="RHEA-COMP:9699"/>
        <dbReference type="Rhea" id="RHEA-COMP:10636"/>
        <dbReference type="Rhea" id="RHEA-COMP:10637"/>
        <dbReference type="ChEBI" id="CHEBI:78442"/>
        <dbReference type="ChEBI" id="CHEBI:78531"/>
        <dbReference type="ChEBI" id="CHEBI:78597"/>
        <dbReference type="ChEBI" id="CHEBI:83561"/>
        <dbReference type="EC" id="2.3.2.6"/>
    </reaction>
</comment>
<comment type="subcellular location">
    <subcellularLocation>
        <location evidence="1">Cytoplasm</location>
    </subcellularLocation>
</comment>
<comment type="similarity">
    <text evidence="1">Belongs to the L/F-transferase family.</text>
</comment>
<reference key="1">
    <citation type="journal article" date="2011" name="J. Bacteriol.">
        <title>Complete genome sequence and updated annotation of Desulfovibrio alaskensis G20.</title>
        <authorList>
            <person name="Hauser L.J."/>
            <person name="Land M.L."/>
            <person name="Brown S.D."/>
            <person name="Larimer F."/>
            <person name="Keller K.L."/>
            <person name="Rapp-Giles B.J."/>
            <person name="Price M.N."/>
            <person name="Lin M."/>
            <person name="Bruce D.C."/>
            <person name="Detter J.C."/>
            <person name="Tapia R."/>
            <person name="Han C.S."/>
            <person name="Goodwin L.A."/>
            <person name="Cheng J.F."/>
            <person name="Pitluck S."/>
            <person name="Copeland A."/>
            <person name="Lucas S."/>
            <person name="Nolan M."/>
            <person name="Lapidus A.L."/>
            <person name="Palumbo A.V."/>
            <person name="Wall J.D."/>
        </authorList>
    </citation>
    <scope>NUCLEOTIDE SEQUENCE [LARGE SCALE GENOMIC DNA]</scope>
    <source>
        <strain>ATCC BAA-1058 / DSM 17464 / G20</strain>
    </source>
</reference>
<evidence type="ECO:0000255" key="1">
    <source>
        <dbReference type="HAMAP-Rule" id="MF_00688"/>
    </source>
</evidence>
<gene>
    <name evidence="1" type="primary">aat</name>
    <name type="ordered locus">Dde_2098</name>
</gene>
<feature type="chain" id="PRO_0000258057" description="Leucyl/phenylalanyl-tRNA--protein transferase">
    <location>
        <begin position="1"/>
        <end position="248"/>
    </location>
</feature>
<protein>
    <recommendedName>
        <fullName evidence="1">Leucyl/phenylalanyl-tRNA--protein transferase</fullName>
        <ecNumber evidence="1">2.3.2.6</ecNumber>
    </recommendedName>
    <alternativeName>
        <fullName evidence="1">L/F-transferase</fullName>
    </alternativeName>
    <alternativeName>
        <fullName evidence="1">Leucyltransferase</fullName>
    </alternativeName>
    <alternativeName>
        <fullName evidence="1">Phenyalanyltransferase</fullName>
    </alternativeName>
</protein>
<name>LFTR_OLEA2</name>
<keyword id="KW-0012">Acyltransferase</keyword>
<keyword id="KW-0963">Cytoplasm</keyword>
<keyword id="KW-1185">Reference proteome</keyword>
<keyword id="KW-0808">Transferase</keyword>
<accession>Q30ZK1</accession>
<proteinExistence type="inferred from homology"/>
<organism>
    <name type="scientific">Oleidesulfovibrio alaskensis (strain ATCC BAA-1058 / DSM 17464 / G20)</name>
    <name type="common">Desulfovibrio alaskensis</name>
    <dbReference type="NCBI Taxonomy" id="207559"/>
    <lineage>
        <taxon>Bacteria</taxon>
        <taxon>Pseudomonadati</taxon>
        <taxon>Thermodesulfobacteriota</taxon>
        <taxon>Desulfovibrionia</taxon>
        <taxon>Desulfovibrionales</taxon>
        <taxon>Desulfovibrionaceae</taxon>
        <taxon>Oleidesulfovibrio</taxon>
    </lineage>
</organism>
<sequence length="248" mass="27736">MHLYALSEKLEFPDPQTASSEGLLAIGGDLSVARLVTAYANGIFPWYDDDTPILWWSPDPRCVLYPSQLHVPASLRRRINSGQFEVTLDTAFEAVIHACADAARPGQSGTWIVDEMIDAYMNLHEAGVAHSVEVWSRGAGDGRVLAGGLYGVALGGVFYGESMFYRRTDASKVAVVWLVRLLEFWGYRVVDCQQTTTHMLRFGAQEVSRACFLEELDRALRMPLRAGRWQIPDGFRPLRRATLPDENQ</sequence>
<dbReference type="EC" id="2.3.2.6" evidence="1"/>
<dbReference type="EMBL" id="CP000112">
    <property type="protein sequence ID" value="ABB38895.1"/>
    <property type="molecule type" value="Genomic_DNA"/>
</dbReference>
<dbReference type="RefSeq" id="WP_011367999.1">
    <property type="nucleotide sequence ID" value="NC_007519.1"/>
</dbReference>
<dbReference type="SMR" id="Q30ZK1"/>
<dbReference type="STRING" id="207559.Dde_2098"/>
<dbReference type="KEGG" id="dde:Dde_2098"/>
<dbReference type="eggNOG" id="COG2360">
    <property type="taxonomic scope" value="Bacteria"/>
</dbReference>
<dbReference type="HOGENOM" id="CLU_075045_0_0_7"/>
<dbReference type="Proteomes" id="UP000002710">
    <property type="component" value="Chromosome"/>
</dbReference>
<dbReference type="GO" id="GO:0005737">
    <property type="term" value="C:cytoplasm"/>
    <property type="evidence" value="ECO:0007669"/>
    <property type="project" value="UniProtKB-SubCell"/>
</dbReference>
<dbReference type="GO" id="GO:0008914">
    <property type="term" value="F:leucyl-tRNA--protein transferase activity"/>
    <property type="evidence" value="ECO:0007669"/>
    <property type="project" value="UniProtKB-UniRule"/>
</dbReference>
<dbReference type="GO" id="GO:0030163">
    <property type="term" value="P:protein catabolic process"/>
    <property type="evidence" value="ECO:0007669"/>
    <property type="project" value="UniProtKB-UniRule"/>
</dbReference>
<dbReference type="FunFam" id="3.30.70.3550:FF:000001">
    <property type="entry name" value="Leucyl/phenylalanyl-tRNA--protein transferase"/>
    <property type="match status" value="1"/>
</dbReference>
<dbReference type="Gene3D" id="3.40.630.70">
    <property type="entry name" value="Leucyl/phenylalanyl-tRNA-protein transferase, C-terminal domain"/>
    <property type="match status" value="1"/>
</dbReference>
<dbReference type="Gene3D" id="3.30.70.3550">
    <property type="entry name" value="Leucyl/phenylalanyl-tRNA-protein transferase, N-terminal domain"/>
    <property type="match status" value="1"/>
</dbReference>
<dbReference type="HAMAP" id="MF_00688">
    <property type="entry name" value="Leu_Phe_trans"/>
    <property type="match status" value="1"/>
</dbReference>
<dbReference type="InterPro" id="IPR016181">
    <property type="entry name" value="Acyl_CoA_acyltransferase"/>
</dbReference>
<dbReference type="InterPro" id="IPR004616">
    <property type="entry name" value="Leu/Phe-tRNA_Trfase"/>
</dbReference>
<dbReference type="InterPro" id="IPR042203">
    <property type="entry name" value="Leu/Phe-tRNA_Trfase_C"/>
</dbReference>
<dbReference type="InterPro" id="IPR042221">
    <property type="entry name" value="Leu/Phe-tRNA_Trfase_N"/>
</dbReference>
<dbReference type="NCBIfam" id="TIGR00667">
    <property type="entry name" value="aat"/>
    <property type="match status" value="1"/>
</dbReference>
<dbReference type="PANTHER" id="PTHR30098">
    <property type="entry name" value="LEUCYL/PHENYLALANYL-TRNA--PROTEIN TRANSFERASE"/>
    <property type="match status" value="1"/>
</dbReference>
<dbReference type="PANTHER" id="PTHR30098:SF2">
    <property type="entry name" value="LEUCYL_PHENYLALANYL-TRNA--PROTEIN TRANSFERASE"/>
    <property type="match status" value="1"/>
</dbReference>
<dbReference type="Pfam" id="PF03588">
    <property type="entry name" value="Leu_Phe_trans"/>
    <property type="match status" value="1"/>
</dbReference>
<dbReference type="SUPFAM" id="SSF55729">
    <property type="entry name" value="Acyl-CoA N-acyltransferases (Nat)"/>
    <property type="match status" value="1"/>
</dbReference>